<evidence type="ECO:0000250" key="1">
    <source>
        <dbReference type="UniProtKB" id="Q4U2R6"/>
    </source>
</evidence>
<evidence type="ECO:0000255" key="2"/>
<evidence type="ECO:0000305" key="3"/>
<keyword id="KW-0496">Mitochondrion</keyword>
<keyword id="KW-1185">Reference proteome</keyword>
<keyword id="KW-0687">Ribonucleoprotein</keyword>
<keyword id="KW-0689">Ribosomal protein</keyword>
<keyword id="KW-0809">Transit peptide</keyword>
<protein>
    <recommendedName>
        <fullName evidence="3">Large ribosomal subunit protein mL51</fullName>
    </recommendedName>
    <alternativeName>
        <fullName>39S ribosomal protein L51, mitochondrial</fullName>
        <shortName>L51mt</shortName>
        <shortName>MRP-L51</shortName>
    </alternativeName>
</protein>
<comment type="subunit">
    <text evidence="1">Component of the mitochondrial ribosome large subunit (39S) which comprises a 16S rRNA and about 50 distinct proteins (By similarity).</text>
</comment>
<comment type="subcellular location">
    <subcellularLocation>
        <location evidence="1">Mitochondrion</location>
    </subcellularLocation>
</comment>
<comment type="similarity">
    <text evidence="3">Belongs to the mitochondrion-specific ribosomal protein mL51 family.</text>
</comment>
<comment type="sequence caution" evidence="3">
    <conflict type="erroneous initiation">
        <sequence resource="EMBL-CDS" id="AAH78506"/>
    </conflict>
</comment>
<name>RM51_XENLA</name>
<feature type="transit peptide" description="Mitochondrion" evidence="2">
    <location>
        <begin position="1"/>
        <end position="29"/>
    </location>
</feature>
<feature type="chain" id="PRO_0000273086" description="Large ribosomal subunit protein mL51">
    <location>
        <begin position="30"/>
        <end position="125"/>
    </location>
</feature>
<accession>Q66KZ3</accession>
<gene>
    <name type="primary">mrpl51</name>
</gene>
<organism>
    <name type="scientific">Xenopus laevis</name>
    <name type="common">African clawed frog</name>
    <dbReference type="NCBI Taxonomy" id="8355"/>
    <lineage>
        <taxon>Eukaryota</taxon>
        <taxon>Metazoa</taxon>
        <taxon>Chordata</taxon>
        <taxon>Craniata</taxon>
        <taxon>Vertebrata</taxon>
        <taxon>Euteleostomi</taxon>
        <taxon>Amphibia</taxon>
        <taxon>Batrachia</taxon>
        <taxon>Anura</taxon>
        <taxon>Pipoidea</taxon>
        <taxon>Pipidae</taxon>
        <taxon>Xenopodinae</taxon>
        <taxon>Xenopus</taxon>
        <taxon>Xenopus</taxon>
    </lineage>
</organism>
<dbReference type="EMBL" id="BC078506">
    <property type="protein sequence ID" value="AAH78506.1"/>
    <property type="status" value="ALT_INIT"/>
    <property type="molecule type" value="mRNA"/>
</dbReference>
<dbReference type="SMR" id="Q66KZ3"/>
<dbReference type="GeneID" id="446921"/>
<dbReference type="KEGG" id="xla:446921"/>
<dbReference type="AGR" id="Xenbase:XB-GENE-5936487"/>
<dbReference type="CTD" id="446921"/>
<dbReference type="Xenbase" id="XB-GENE-5936487">
    <property type="gene designation" value="mrpl51.L"/>
</dbReference>
<dbReference type="OrthoDB" id="10059330at2759"/>
<dbReference type="Proteomes" id="UP000186698">
    <property type="component" value="Chromosome 7L"/>
</dbReference>
<dbReference type="Bgee" id="446921">
    <property type="expression patterns" value="Expressed in oocyte and 19 other cell types or tissues"/>
</dbReference>
<dbReference type="GO" id="GO:0005762">
    <property type="term" value="C:mitochondrial large ribosomal subunit"/>
    <property type="evidence" value="ECO:0000250"/>
    <property type="project" value="UniProtKB"/>
</dbReference>
<dbReference type="GO" id="GO:0003735">
    <property type="term" value="F:structural constituent of ribosome"/>
    <property type="evidence" value="ECO:0000250"/>
    <property type="project" value="UniProtKB"/>
</dbReference>
<dbReference type="GO" id="GO:0006412">
    <property type="term" value="P:translation"/>
    <property type="evidence" value="ECO:0000250"/>
    <property type="project" value="UniProtKB"/>
</dbReference>
<dbReference type="InterPro" id="IPR019373">
    <property type="entry name" value="Ribosomal_mL51"/>
</dbReference>
<dbReference type="PANTHER" id="PTHR13409:SF0">
    <property type="entry name" value="LARGE RIBOSOMAL SUBUNIT PROTEIN ML51"/>
    <property type="match status" value="1"/>
</dbReference>
<dbReference type="PANTHER" id="PTHR13409">
    <property type="entry name" value="MITOCHONDRIAL 39S RIBOSOMAL PROTEIN L51"/>
    <property type="match status" value="1"/>
</dbReference>
<dbReference type="Pfam" id="PF10244">
    <property type="entry name" value="MRP-L51"/>
    <property type="match status" value="1"/>
</dbReference>
<reference key="1">
    <citation type="submission" date="2004-07" db="EMBL/GenBank/DDBJ databases">
        <authorList>
            <consortium name="NIH - Xenopus Gene Collection (XGC) project"/>
        </authorList>
    </citation>
    <scope>NUCLEOTIDE SEQUENCE [LARGE SCALE MRNA]</scope>
</reference>
<sequence length="125" mass="15193">MWSVQKLLWGCRSLLPQGCRSFSLGNRDLRKVDFMPQPKNTDRWDNKRALYGVYDNIGILGDFKAHPRDLIIGPFWLRGWKGNELQRCIRKRQMVGPRMFYQDRENLTKRIRFLYKRFNRYGKHR</sequence>
<proteinExistence type="evidence at transcript level"/>